<dbReference type="EC" id="6.1.1.11" evidence="1"/>
<dbReference type="EMBL" id="CP000859">
    <property type="protein sequence ID" value="ABW68548.1"/>
    <property type="molecule type" value="Genomic_DNA"/>
</dbReference>
<dbReference type="RefSeq" id="WP_012176159.1">
    <property type="nucleotide sequence ID" value="NC_009943.1"/>
</dbReference>
<dbReference type="SMR" id="A8ZXS1"/>
<dbReference type="STRING" id="96561.Dole_2745"/>
<dbReference type="KEGG" id="dol:Dole_2745"/>
<dbReference type="eggNOG" id="COG0172">
    <property type="taxonomic scope" value="Bacteria"/>
</dbReference>
<dbReference type="HOGENOM" id="CLU_023797_1_1_7"/>
<dbReference type="OrthoDB" id="9804647at2"/>
<dbReference type="UniPathway" id="UPA00906">
    <property type="reaction ID" value="UER00895"/>
</dbReference>
<dbReference type="Proteomes" id="UP000008561">
    <property type="component" value="Chromosome"/>
</dbReference>
<dbReference type="GO" id="GO:0005737">
    <property type="term" value="C:cytoplasm"/>
    <property type="evidence" value="ECO:0007669"/>
    <property type="project" value="UniProtKB-SubCell"/>
</dbReference>
<dbReference type="GO" id="GO:0005524">
    <property type="term" value="F:ATP binding"/>
    <property type="evidence" value="ECO:0007669"/>
    <property type="project" value="UniProtKB-UniRule"/>
</dbReference>
<dbReference type="GO" id="GO:0004828">
    <property type="term" value="F:serine-tRNA ligase activity"/>
    <property type="evidence" value="ECO:0007669"/>
    <property type="project" value="UniProtKB-UniRule"/>
</dbReference>
<dbReference type="GO" id="GO:0016260">
    <property type="term" value="P:selenocysteine biosynthetic process"/>
    <property type="evidence" value="ECO:0007669"/>
    <property type="project" value="UniProtKB-UniRule"/>
</dbReference>
<dbReference type="GO" id="GO:0006434">
    <property type="term" value="P:seryl-tRNA aminoacylation"/>
    <property type="evidence" value="ECO:0007669"/>
    <property type="project" value="UniProtKB-UniRule"/>
</dbReference>
<dbReference type="CDD" id="cd00770">
    <property type="entry name" value="SerRS_core"/>
    <property type="match status" value="1"/>
</dbReference>
<dbReference type="Gene3D" id="3.30.930.10">
    <property type="entry name" value="Bira Bifunctional Protein, Domain 2"/>
    <property type="match status" value="1"/>
</dbReference>
<dbReference type="Gene3D" id="1.10.287.40">
    <property type="entry name" value="Serine-tRNA synthetase, tRNA binding domain"/>
    <property type="match status" value="1"/>
</dbReference>
<dbReference type="HAMAP" id="MF_00176">
    <property type="entry name" value="Ser_tRNA_synth_type1"/>
    <property type="match status" value="1"/>
</dbReference>
<dbReference type="InterPro" id="IPR002314">
    <property type="entry name" value="aa-tRNA-synt_IIb"/>
</dbReference>
<dbReference type="InterPro" id="IPR006195">
    <property type="entry name" value="aa-tRNA-synth_II"/>
</dbReference>
<dbReference type="InterPro" id="IPR045864">
    <property type="entry name" value="aa-tRNA-synth_II/BPL/LPL"/>
</dbReference>
<dbReference type="InterPro" id="IPR002317">
    <property type="entry name" value="Ser-tRNA-ligase_type_1"/>
</dbReference>
<dbReference type="InterPro" id="IPR015866">
    <property type="entry name" value="Ser-tRNA-synth_1_N"/>
</dbReference>
<dbReference type="InterPro" id="IPR042103">
    <property type="entry name" value="SerRS_1_N_sf"/>
</dbReference>
<dbReference type="InterPro" id="IPR033729">
    <property type="entry name" value="SerRS_core"/>
</dbReference>
<dbReference type="InterPro" id="IPR010978">
    <property type="entry name" value="tRNA-bd_arm"/>
</dbReference>
<dbReference type="NCBIfam" id="TIGR00414">
    <property type="entry name" value="serS"/>
    <property type="match status" value="1"/>
</dbReference>
<dbReference type="PANTHER" id="PTHR43697:SF1">
    <property type="entry name" value="SERINE--TRNA LIGASE"/>
    <property type="match status" value="1"/>
</dbReference>
<dbReference type="PANTHER" id="PTHR43697">
    <property type="entry name" value="SERYL-TRNA SYNTHETASE"/>
    <property type="match status" value="1"/>
</dbReference>
<dbReference type="Pfam" id="PF02403">
    <property type="entry name" value="Seryl_tRNA_N"/>
    <property type="match status" value="1"/>
</dbReference>
<dbReference type="Pfam" id="PF00587">
    <property type="entry name" value="tRNA-synt_2b"/>
    <property type="match status" value="1"/>
</dbReference>
<dbReference type="PIRSF" id="PIRSF001529">
    <property type="entry name" value="Ser-tRNA-synth_IIa"/>
    <property type="match status" value="1"/>
</dbReference>
<dbReference type="PRINTS" id="PR00981">
    <property type="entry name" value="TRNASYNTHSER"/>
</dbReference>
<dbReference type="SUPFAM" id="SSF55681">
    <property type="entry name" value="Class II aaRS and biotin synthetases"/>
    <property type="match status" value="1"/>
</dbReference>
<dbReference type="SUPFAM" id="SSF46589">
    <property type="entry name" value="tRNA-binding arm"/>
    <property type="match status" value="1"/>
</dbReference>
<dbReference type="PROSITE" id="PS50862">
    <property type="entry name" value="AA_TRNA_LIGASE_II"/>
    <property type="match status" value="1"/>
</dbReference>
<sequence length="425" mass="47539">MLDSRFVREQADRARQALAHRNEDPVMIDAFLGYDTARKDILAEIEALRHKRNVASDTIAQMKKAGQTADEPIAAMREVSAKIKELEVLLAENQEKSDALLMRIPNIPHASVPIGPDESANVTEREVGTPPAFDFAPRPHEEIGEALGIFDFARAAKIAGARFPLYKGAGALMERALINFMLDIHTTEHGYTECLPPLMVNAKTMTGTGQLPKFEEDLFKLERWGFYLIPTAEVPVTNIFADEILNEADLPIKYTAYTPCFRSEAGSYGKDTKGLIRQHQFNKVELVKFAHPEHSYDELEKLLADAETILQRLGLAYRVITLCSGDMGFSAAKTYDIEVWFPAQNRYREISSCSNFEDFQARRANIRFKRPGQKGTGFVHTLNGSGLAVGRTLAAILENFQTKEGAVEIPDTLRPYMRNMAVLSL</sequence>
<proteinExistence type="inferred from homology"/>
<accession>A8ZXS1</accession>
<gene>
    <name evidence="1" type="primary">serS</name>
    <name type="ordered locus">Dole_2745</name>
</gene>
<name>SYS_DESOH</name>
<evidence type="ECO:0000255" key="1">
    <source>
        <dbReference type="HAMAP-Rule" id="MF_00176"/>
    </source>
</evidence>
<reference key="1">
    <citation type="submission" date="2007-10" db="EMBL/GenBank/DDBJ databases">
        <title>Complete sequence of Desulfococcus oleovorans Hxd3.</title>
        <authorList>
            <consortium name="US DOE Joint Genome Institute"/>
            <person name="Copeland A."/>
            <person name="Lucas S."/>
            <person name="Lapidus A."/>
            <person name="Barry K."/>
            <person name="Glavina del Rio T."/>
            <person name="Dalin E."/>
            <person name="Tice H."/>
            <person name="Pitluck S."/>
            <person name="Kiss H."/>
            <person name="Brettin T."/>
            <person name="Bruce D."/>
            <person name="Detter J.C."/>
            <person name="Han C."/>
            <person name="Schmutz J."/>
            <person name="Larimer F."/>
            <person name="Land M."/>
            <person name="Hauser L."/>
            <person name="Kyrpides N."/>
            <person name="Kim E."/>
            <person name="Wawrik B."/>
            <person name="Richardson P."/>
        </authorList>
    </citation>
    <scope>NUCLEOTIDE SEQUENCE [LARGE SCALE GENOMIC DNA]</scope>
    <source>
        <strain>DSM 6200 / JCM 39069 / Hxd3</strain>
    </source>
</reference>
<protein>
    <recommendedName>
        <fullName evidence="1">Serine--tRNA ligase</fullName>
        <ecNumber evidence="1">6.1.1.11</ecNumber>
    </recommendedName>
    <alternativeName>
        <fullName evidence="1">Seryl-tRNA synthetase</fullName>
        <shortName evidence="1">SerRS</shortName>
    </alternativeName>
    <alternativeName>
        <fullName evidence="1">Seryl-tRNA(Ser/Sec) synthetase</fullName>
    </alternativeName>
</protein>
<comment type="function">
    <text evidence="1">Catalyzes the attachment of serine to tRNA(Ser). Is also able to aminoacylate tRNA(Sec) with serine, to form the misacylated tRNA L-seryl-tRNA(Sec), which will be further converted into selenocysteinyl-tRNA(Sec).</text>
</comment>
<comment type="catalytic activity">
    <reaction evidence="1">
        <text>tRNA(Ser) + L-serine + ATP = L-seryl-tRNA(Ser) + AMP + diphosphate + H(+)</text>
        <dbReference type="Rhea" id="RHEA:12292"/>
        <dbReference type="Rhea" id="RHEA-COMP:9669"/>
        <dbReference type="Rhea" id="RHEA-COMP:9703"/>
        <dbReference type="ChEBI" id="CHEBI:15378"/>
        <dbReference type="ChEBI" id="CHEBI:30616"/>
        <dbReference type="ChEBI" id="CHEBI:33019"/>
        <dbReference type="ChEBI" id="CHEBI:33384"/>
        <dbReference type="ChEBI" id="CHEBI:78442"/>
        <dbReference type="ChEBI" id="CHEBI:78533"/>
        <dbReference type="ChEBI" id="CHEBI:456215"/>
        <dbReference type="EC" id="6.1.1.11"/>
    </reaction>
</comment>
<comment type="catalytic activity">
    <reaction evidence="1">
        <text>tRNA(Sec) + L-serine + ATP = L-seryl-tRNA(Sec) + AMP + diphosphate + H(+)</text>
        <dbReference type="Rhea" id="RHEA:42580"/>
        <dbReference type="Rhea" id="RHEA-COMP:9742"/>
        <dbReference type="Rhea" id="RHEA-COMP:10128"/>
        <dbReference type="ChEBI" id="CHEBI:15378"/>
        <dbReference type="ChEBI" id="CHEBI:30616"/>
        <dbReference type="ChEBI" id="CHEBI:33019"/>
        <dbReference type="ChEBI" id="CHEBI:33384"/>
        <dbReference type="ChEBI" id="CHEBI:78442"/>
        <dbReference type="ChEBI" id="CHEBI:78533"/>
        <dbReference type="ChEBI" id="CHEBI:456215"/>
        <dbReference type="EC" id="6.1.1.11"/>
    </reaction>
</comment>
<comment type="pathway">
    <text evidence="1">Aminoacyl-tRNA biosynthesis; selenocysteinyl-tRNA(Sec) biosynthesis; L-seryl-tRNA(Sec) from L-serine and tRNA(Sec): step 1/1.</text>
</comment>
<comment type="subunit">
    <text evidence="1">Homodimer. The tRNA molecule binds across the dimer.</text>
</comment>
<comment type="subcellular location">
    <subcellularLocation>
        <location evidence="1">Cytoplasm</location>
    </subcellularLocation>
</comment>
<comment type="domain">
    <text evidence="1">Consists of two distinct domains, a catalytic core and a N-terminal extension that is involved in tRNA binding.</text>
</comment>
<comment type="similarity">
    <text evidence="1">Belongs to the class-II aminoacyl-tRNA synthetase family. Type-1 seryl-tRNA synthetase subfamily.</text>
</comment>
<keyword id="KW-0030">Aminoacyl-tRNA synthetase</keyword>
<keyword id="KW-0067">ATP-binding</keyword>
<keyword id="KW-0963">Cytoplasm</keyword>
<keyword id="KW-0436">Ligase</keyword>
<keyword id="KW-0547">Nucleotide-binding</keyword>
<keyword id="KW-0648">Protein biosynthesis</keyword>
<keyword id="KW-1185">Reference proteome</keyword>
<feature type="chain" id="PRO_1000098061" description="Serine--tRNA ligase">
    <location>
        <begin position="1"/>
        <end position="425"/>
    </location>
</feature>
<feature type="binding site" evidence="1">
    <location>
        <begin position="231"/>
        <end position="233"/>
    </location>
    <ligand>
        <name>L-serine</name>
        <dbReference type="ChEBI" id="CHEBI:33384"/>
    </ligand>
</feature>
<feature type="binding site" evidence="1">
    <location>
        <begin position="262"/>
        <end position="264"/>
    </location>
    <ligand>
        <name>ATP</name>
        <dbReference type="ChEBI" id="CHEBI:30616"/>
    </ligand>
</feature>
<feature type="binding site" evidence="1">
    <location>
        <position position="285"/>
    </location>
    <ligand>
        <name>L-serine</name>
        <dbReference type="ChEBI" id="CHEBI:33384"/>
    </ligand>
</feature>
<feature type="binding site" evidence="1">
    <location>
        <begin position="349"/>
        <end position="352"/>
    </location>
    <ligand>
        <name>ATP</name>
        <dbReference type="ChEBI" id="CHEBI:30616"/>
    </ligand>
</feature>
<feature type="binding site" evidence="1">
    <location>
        <position position="385"/>
    </location>
    <ligand>
        <name>L-serine</name>
        <dbReference type="ChEBI" id="CHEBI:33384"/>
    </ligand>
</feature>
<organism>
    <name type="scientific">Desulfosudis oleivorans (strain DSM 6200 / JCM 39069 / Hxd3)</name>
    <name type="common">Desulfococcus oleovorans</name>
    <dbReference type="NCBI Taxonomy" id="96561"/>
    <lineage>
        <taxon>Bacteria</taxon>
        <taxon>Pseudomonadati</taxon>
        <taxon>Thermodesulfobacteriota</taxon>
        <taxon>Desulfobacteria</taxon>
        <taxon>Desulfobacterales</taxon>
        <taxon>Desulfosudaceae</taxon>
        <taxon>Desulfosudis</taxon>
    </lineage>
</organism>